<keyword id="KW-0325">Glycoprotein</keyword>
<keyword id="KW-0378">Hydrolase</keyword>
<keyword id="KW-1185">Reference proteome</keyword>
<keyword id="KW-0732">Signal</keyword>
<reference key="1">
    <citation type="journal article" date="1984" name="Nucleic Acids Res.">
        <title>Structural analysis of the two tandemly repeated acid phosphatase genes in yeast.</title>
        <authorList>
            <person name="Bajwa W."/>
            <person name="Meyhack B."/>
            <person name="Rudolph H."/>
            <person name="Schweingruber A.-M."/>
            <person name="Hinnen A."/>
        </authorList>
    </citation>
    <scope>NUCLEOTIDE SEQUENCE [GENOMIC DNA]</scope>
</reference>
<reference key="2">
    <citation type="journal article" date="1994" name="Yeast">
        <title>Analysis of a 70 kb region on the right arm of yeast chromosome II.</title>
        <authorList>
            <person name="Mannhaupt G."/>
            <person name="Stucka R."/>
            <person name="Ehnle S."/>
            <person name="Vetter I."/>
            <person name="Feldmann H."/>
        </authorList>
    </citation>
    <scope>NUCLEOTIDE SEQUENCE [GENOMIC DNA]</scope>
    <source>
        <strain>ATCC 204508 / S288c</strain>
    </source>
</reference>
<reference key="3">
    <citation type="journal article" date="1994" name="EMBO J.">
        <title>Complete DNA sequence of yeast chromosome II.</title>
        <authorList>
            <person name="Feldmann H."/>
            <person name="Aigle M."/>
            <person name="Aljinovic G."/>
            <person name="Andre B."/>
            <person name="Baclet M.C."/>
            <person name="Barthe C."/>
            <person name="Baur A."/>
            <person name="Becam A.-M."/>
            <person name="Biteau N."/>
            <person name="Boles E."/>
            <person name="Brandt T."/>
            <person name="Brendel M."/>
            <person name="Brueckner M."/>
            <person name="Bussereau F."/>
            <person name="Christiansen C."/>
            <person name="Contreras R."/>
            <person name="Crouzet M."/>
            <person name="Cziepluch C."/>
            <person name="Demolis N."/>
            <person name="Delaveau T."/>
            <person name="Doignon F."/>
            <person name="Domdey H."/>
            <person name="Duesterhus S."/>
            <person name="Dubois E."/>
            <person name="Dujon B."/>
            <person name="El Bakkoury M."/>
            <person name="Entian K.-D."/>
            <person name="Feuermann M."/>
            <person name="Fiers W."/>
            <person name="Fobo G.M."/>
            <person name="Fritz C."/>
            <person name="Gassenhuber J."/>
            <person name="Glansdorff N."/>
            <person name="Goffeau A."/>
            <person name="Grivell L.A."/>
            <person name="de Haan M."/>
            <person name="Hein C."/>
            <person name="Herbert C.J."/>
            <person name="Hollenberg C.P."/>
            <person name="Holmstroem K."/>
            <person name="Jacq C."/>
            <person name="Jacquet M."/>
            <person name="Jauniaux J.-C."/>
            <person name="Jonniaux J.-L."/>
            <person name="Kallesoee T."/>
            <person name="Kiesau P."/>
            <person name="Kirchrath L."/>
            <person name="Koetter P."/>
            <person name="Korol S."/>
            <person name="Liebl S."/>
            <person name="Logghe M."/>
            <person name="Lohan A.J.E."/>
            <person name="Louis E.J."/>
            <person name="Li Z.Y."/>
            <person name="Maat M.J."/>
            <person name="Mallet L."/>
            <person name="Mannhaupt G."/>
            <person name="Messenguy F."/>
            <person name="Miosga T."/>
            <person name="Molemans F."/>
            <person name="Mueller S."/>
            <person name="Nasr F."/>
            <person name="Obermaier B."/>
            <person name="Perea J."/>
            <person name="Pierard A."/>
            <person name="Piravandi E."/>
            <person name="Pohl F.M."/>
            <person name="Pohl T.M."/>
            <person name="Potier S."/>
            <person name="Proft M."/>
            <person name="Purnelle B."/>
            <person name="Ramezani Rad M."/>
            <person name="Rieger M."/>
            <person name="Rose M."/>
            <person name="Schaaff-Gerstenschlaeger I."/>
            <person name="Scherens B."/>
            <person name="Schwarzlose C."/>
            <person name="Skala J."/>
            <person name="Slonimski P.P."/>
            <person name="Smits P.H.M."/>
            <person name="Souciet J.-L."/>
            <person name="Steensma H.Y."/>
            <person name="Stucka R."/>
            <person name="Urrestarazu L.A."/>
            <person name="van der Aart Q.J.M."/>
            <person name="Van Dyck L."/>
            <person name="Vassarotti A."/>
            <person name="Vetter I."/>
            <person name="Vierendeels F."/>
            <person name="Vissers S."/>
            <person name="Wagner G."/>
            <person name="de Wergifosse P."/>
            <person name="Wolfe K.H."/>
            <person name="Zagulski M."/>
            <person name="Zimmermann F.K."/>
            <person name="Mewes H.-W."/>
            <person name="Kleine K."/>
        </authorList>
    </citation>
    <scope>NUCLEOTIDE SEQUENCE [LARGE SCALE GENOMIC DNA]</scope>
    <source>
        <strain>ATCC 204508 / S288c</strain>
    </source>
</reference>
<reference key="4">
    <citation type="journal article" date="2014" name="G3 (Bethesda)">
        <title>The reference genome sequence of Saccharomyces cerevisiae: Then and now.</title>
        <authorList>
            <person name="Engel S.R."/>
            <person name="Dietrich F.S."/>
            <person name="Fisk D.G."/>
            <person name="Binkley G."/>
            <person name="Balakrishnan R."/>
            <person name="Costanzo M.C."/>
            <person name="Dwight S.S."/>
            <person name="Hitz B.C."/>
            <person name="Karra K."/>
            <person name="Nash R.S."/>
            <person name="Weng S."/>
            <person name="Wong E.D."/>
            <person name="Lloyd P."/>
            <person name="Skrzypek M.S."/>
            <person name="Miyasato S.R."/>
            <person name="Simison M."/>
            <person name="Cherry J.M."/>
        </authorList>
    </citation>
    <scope>GENOME REANNOTATION</scope>
    <source>
        <strain>ATCC 204508 / S288c</strain>
    </source>
</reference>
<reference key="5">
    <citation type="journal article" date="2003" name="Nature">
        <title>Global analysis of protein expression in yeast.</title>
        <authorList>
            <person name="Ghaemmaghami S."/>
            <person name="Huh W.-K."/>
            <person name="Bower K."/>
            <person name="Howson R.W."/>
            <person name="Belle A."/>
            <person name="Dephoure N."/>
            <person name="O'Shea E.K."/>
            <person name="Weissman J.S."/>
        </authorList>
    </citation>
    <scope>LEVEL OF PROTEIN EXPRESSION [LARGE SCALE ANALYSIS]</scope>
</reference>
<accession>P24031</accession>
<accession>D6VQ93</accession>
<protein>
    <recommendedName>
        <fullName>Constitutive acid phosphatase</fullName>
        <ecNumber>3.1.3.2</ecNumber>
    </recommendedName>
</protein>
<comment type="catalytic activity">
    <reaction>
        <text>a phosphate monoester + H2O = an alcohol + phosphate</text>
        <dbReference type="Rhea" id="RHEA:15017"/>
        <dbReference type="ChEBI" id="CHEBI:15377"/>
        <dbReference type="ChEBI" id="CHEBI:30879"/>
        <dbReference type="ChEBI" id="CHEBI:43474"/>
        <dbReference type="ChEBI" id="CHEBI:67140"/>
        <dbReference type="EC" id="3.1.3.2"/>
    </reaction>
</comment>
<comment type="miscellaneous">
    <text evidence="3">Present with 952 molecules/cell in log phase SD medium.</text>
</comment>
<comment type="similarity">
    <text evidence="4">Belongs to the histidine acid phosphatase family.</text>
</comment>
<name>PPA3_YEAST</name>
<evidence type="ECO:0000250" key="1"/>
<evidence type="ECO:0000255" key="2"/>
<evidence type="ECO:0000269" key="3">
    <source>
    </source>
</evidence>
<evidence type="ECO:0000305" key="4"/>
<dbReference type="EC" id="3.1.3.2"/>
<dbReference type="EMBL" id="X01080">
    <property type="protein sequence ID" value="CAA25557.1"/>
    <property type="molecule type" value="Genomic_DNA"/>
</dbReference>
<dbReference type="EMBL" id="X78993">
    <property type="protein sequence ID" value="CAA55597.1"/>
    <property type="molecule type" value="Genomic_DNA"/>
</dbReference>
<dbReference type="EMBL" id="Z35961">
    <property type="protein sequence ID" value="CAA85045.1"/>
    <property type="molecule type" value="Genomic_DNA"/>
</dbReference>
<dbReference type="EMBL" id="BK006936">
    <property type="protein sequence ID" value="DAA07213.1"/>
    <property type="molecule type" value="Genomic_DNA"/>
</dbReference>
<dbReference type="PIR" id="S48259">
    <property type="entry name" value="PABYCC"/>
</dbReference>
<dbReference type="RefSeq" id="NP_009650.1">
    <property type="nucleotide sequence ID" value="NM_001178440.1"/>
</dbReference>
<dbReference type="SMR" id="P24031"/>
<dbReference type="BioGRID" id="32798">
    <property type="interactions" value="80"/>
</dbReference>
<dbReference type="FunCoup" id="P24031">
    <property type="interactions" value="487"/>
</dbReference>
<dbReference type="IntAct" id="P24031">
    <property type="interactions" value="3"/>
</dbReference>
<dbReference type="STRING" id="4932.YBR092C"/>
<dbReference type="GlyCosmos" id="P24031">
    <property type="glycosylation" value="12 sites, No reported glycans"/>
</dbReference>
<dbReference type="GlyGen" id="P24031">
    <property type="glycosylation" value="12 sites"/>
</dbReference>
<dbReference type="iPTMnet" id="P24031"/>
<dbReference type="PaxDb" id="4932-YBR092C"/>
<dbReference type="PeptideAtlas" id="P24031"/>
<dbReference type="EnsemblFungi" id="YBR092C_mRNA">
    <property type="protein sequence ID" value="YBR092C"/>
    <property type="gene ID" value="YBR092C"/>
</dbReference>
<dbReference type="GeneID" id="852389"/>
<dbReference type="KEGG" id="sce:YBR092C"/>
<dbReference type="AGR" id="SGD:S000000296"/>
<dbReference type="SGD" id="S000000296">
    <property type="gene designation" value="PHO3"/>
</dbReference>
<dbReference type="VEuPathDB" id="FungiDB:YBR092C"/>
<dbReference type="eggNOG" id="KOG1382">
    <property type="taxonomic scope" value="Eukaryota"/>
</dbReference>
<dbReference type="GeneTree" id="ENSGT00390000018409"/>
<dbReference type="HOGENOM" id="CLU_020880_3_1_1"/>
<dbReference type="InParanoid" id="P24031"/>
<dbReference type="OMA" id="TGEMDAK"/>
<dbReference type="OrthoDB" id="6509975at2759"/>
<dbReference type="BioCyc" id="YEAST:YBR092C-MONOMER"/>
<dbReference type="BRENDA" id="3.1.3.2">
    <property type="organism ID" value="984"/>
</dbReference>
<dbReference type="BioGRID-ORCS" id="852389">
    <property type="hits" value="0 hits in 10 CRISPR screens"/>
</dbReference>
<dbReference type="PRO" id="PR:P24031"/>
<dbReference type="Proteomes" id="UP000002311">
    <property type="component" value="Chromosome II"/>
</dbReference>
<dbReference type="RNAct" id="P24031">
    <property type="molecule type" value="protein"/>
</dbReference>
<dbReference type="GO" id="GO:0030287">
    <property type="term" value="C:cell wall-bounded periplasmic space"/>
    <property type="evidence" value="ECO:0000315"/>
    <property type="project" value="SGD"/>
</dbReference>
<dbReference type="GO" id="GO:0005783">
    <property type="term" value="C:endoplasmic reticulum"/>
    <property type="evidence" value="ECO:0007005"/>
    <property type="project" value="SGD"/>
</dbReference>
<dbReference type="GO" id="GO:0009277">
    <property type="term" value="C:fungal-type cell wall"/>
    <property type="evidence" value="ECO:0000318"/>
    <property type="project" value="GO_Central"/>
</dbReference>
<dbReference type="GO" id="GO:0003993">
    <property type="term" value="F:acid phosphatase activity"/>
    <property type="evidence" value="ECO:0000315"/>
    <property type="project" value="SGD"/>
</dbReference>
<dbReference type="GO" id="GO:0006796">
    <property type="term" value="P:phosphate-containing compound metabolic process"/>
    <property type="evidence" value="ECO:0000314"/>
    <property type="project" value="SGD"/>
</dbReference>
<dbReference type="GO" id="GO:0042723">
    <property type="term" value="P:thiamine-containing compound metabolic process"/>
    <property type="evidence" value="ECO:0000314"/>
    <property type="project" value="SGD"/>
</dbReference>
<dbReference type="CDD" id="cd07061">
    <property type="entry name" value="HP_HAP_like"/>
    <property type="match status" value="1"/>
</dbReference>
<dbReference type="FunFam" id="3.40.50.1240:FF:000021">
    <property type="entry name" value="Acid phosphatase"/>
    <property type="match status" value="1"/>
</dbReference>
<dbReference type="Gene3D" id="3.40.50.1240">
    <property type="entry name" value="Phosphoglycerate mutase-like"/>
    <property type="match status" value="1"/>
</dbReference>
<dbReference type="InterPro" id="IPR033379">
    <property type="entry name" value="Acid_Pase_AS"/>
</dbReference>
<dbReference type="InterPro" id="IPR000560">
    <property type="entry name" value="His_Pase_clade-2"/>
</dbReference>
<dbReference type="InterPro" id="IPR029033">
    <property type="entry name" value="His_PPase_superfam"/>
</dbReference>
<dbReference type="InterPro" id="IPR016274">
    <property type="entry name" value="Histidine_acid_Pase_euk"/>
</dbReference>
<dbReference type="PANTHER" id="PTHR20963:SF18">
    <property type="entry name" value="ACID PHOSPHATASE PHO11-RELATED"/>
    <property type="match status" value="1"/>
</dbReference>
<dbReference type="PANTHER" id="PTHR20963">
    <property type="entry name" value="MULTIPLE INOSITOL POLYPHOSPHATE PHOSPHATASE-RELATED"/>
    <property type="match status" value="1"/>
</dbReference>
<dbReference type="Pfam" id="PF00328">
    <property type="entry name" value="His_Phos_2"/>
    <property type="match status" value="1"/>
</dbReference>
<dbReference type="PIRSF" id="PIRSF000894">
    <property type="entry name" value="Acid_phosphatase"/>
    <property type="match status" value="1"/>
</dbReference>
<dbReference type="SUPFAM" id="SSF53254">
    <property type="entry name" value="Phosphoglycerate mutase-like"/>
    <property type="match status" value="1"/>
</dbReference>
<dbReference type="PROSITE" id="PS00616">
    <property type="entry name" value="HIS_ACID_PHOSPHAT_1"/>
    <property type="match status" value="1"/>
</dbReference>
<dbReference type="PROSITE" id="PS00778">
    <property type="entry name" value="HIS_ACID_PHOSPHAT_2"/>
    <property type="match status" value="1"/>
</dbReference>
<sequence length="467" mass="52777">MFKSVVYSVLAAALVNAGTIPLGELADVAKIGTQEDIFPFLGGAGPYFSFPGDYGISRDLPEGCEMKQLQMLARHGERYPTYSKGATIMKTWYKLSNYTRQFNGSLSFLNDDYEFFIRDDDDLEMETTFANSDNVLNPYTGEMDAKRHAREFLAQYGYMFENQTSFPIFAASSERVHDTAQYFIDGLGDQFNISLQTVSEAMSAGANTLSAGNACPGWDEDANDDILDKYDTTYLDDIAKRLNKENKGLNLTSKDANTLFAWCAYELNARGYSDVCDIFTEDELVRYSYGQDLVSFYQDGPGYDMIRSVGANLFNATLKLLKQSETQDLKVWLSFTHDTDILNYLTTAGIIDDKNNLTAEYVPFMGNTFHKSWYVPQGARVYTEKFQCSNDTYVRYVINDAVVPIETCSTGPGFSCEINDFYDYAEKRVAGTDFLKVCNVSSVSNVTELTFYWDWNTTHYNDTLLKQ</sequence>
<proteinExistence type="evidence at protein level"/>
<gene>
    <name type="primary">PHO3</name>
    <name type="ordered locus">YBR092C</name>
    <name type="ORF">YBR0813</name>
</gene>
<organism>
    <name type="scientific">Saccharomyces cerevisiae (strain ATCC 204508 / S288c)</name>
    <name type="common">Baker's yeast</name>
    <dbReference type="NCBI Taxonomy" id="559292"/>
    <lineage>
        <taxon>Eukaryota</taxon>
        <taxon>Fungi</taxon>
        <taxon>Dikarya</taxon>
        <taxon>Ascomycota</taxon>
        <taxon>Saccharomycotina</taxon>
        <taxon>Saccharomycetes</taxon>
        <taxon>Saccharomycetales</taxon>
        <taxon>Saccharomycetaceae</taxon>
        <taxon>Saccharomyces</taxon>
    </lineage>
</organism>
<feature type="signal peptide" evidence="2">
    <location>
        <begin position="1"/>
        <end position="17"/>
    </location>
</feature>
<feature type="chain" id="PRO_0000023953" description="Constitutive acid phosphatase">
    <location>
        <begin position="18"/>
        <end position="467"/>
    </location>
</feature>
<feature type="active site" description="Nucleophile" evidence="1">
    <location>
        <position position="75"/>
    </location>
</feature>
<feature type="active site" description="Proton donor" evidence="1">
    <location>
        <position position="338"/>
    </location>
</feature>
<feature type="glycosylation site" description="N-linked (GlcNAc...) asparagine" evidence="2">
    <location>
        <position position="97"/>
    </location>
</feature>
<feature type="glycosylation site" description="N-linked (GlcNAc...) asparagine" evidence="2">
    <location>
        <position position="103"/>
    </location>
</feature>
<feature type="glycosylation site" description="N-linked (GlcNAc...) asparagine" evidence="2">
    <location>
        <position position="162"/>
    </location>
</feature>
<feature type="glycosylation site" description="N-linked (GlcNAc...) asparagine" evidence="2">
    <location>
        <position position="192"/>
    </location>
</feature>
<feature type="glycosylation site" description="N-linked (GlcNAc...) asparagine" evidence="2">
    <location>
        <position position="250"/>
    </location>
</feature>
<feature type="glycosylation site" description="N-linked (GlcNAc...) asparagine" evidence="2">
    <location>
        <position position="315"/>
    </location>
</feature>
<feature type="glycosylation site" description="N-linked (GlcNAc...) asparagine" evidence="2">
    <location>
        <position position="356"/>
    </location>
</feature>
<feature type="glycosylation site" description="N-linked (GlcNAc...) asparagine" evidence="2">
    <location>
        <position position="390"/>
    </location>
</feature>
<feature type="glycosylation site" description="N-linked (GlcNAc...) asparagine" evidence="2">
    <location>
        <position position="439"/>
    </location>
</feature>
<feature type="glycosylation site" description="N-linked (GlcNAc...) asparagine" evidence="2">
    <location>
        <position position="445"/>
    </location>
</feature>
<feature type="glycosylation site" description="N-linked (GlcNAc...) asparagine" evidence="2">
    <location>
        <position position="456"/>
    </location>
</feature>
<feature type="glycosylation site" description="N-linked (GlcNAc...) asparagine" evidence="2">
    <location>
        <position position="461"/>
    </location>
</feature>
<feature type="sequence conflict" description="In Ref. 1; CAA25557." evidence="4" ref="1">
    <original>DED</original>
    <variation>MKT</variation>
    <location>
        <begin position="219"/>
        <end position="221"/>
    </location>
</feature>